<proteinExistence type="evidence at protein level"/>
<protein>
    <recommendedName>
        <fullName>Zinc finger protein ZFP2</fullName>
        <shortName>Zfp-2</shortName>
    </recommendedName>
    <alternativeName>
        <fullName>Zinc finger protein 751</fullName>
    </alternativeName>
</protein>
<gene>
    <name type="primary">ZFP2</name>
    <name type="synonym">ZNF751</name>
</gene>
<dbReference type="EMBL" id="AK025281">
    <property type="protein sequence ID" value="BAB15104.1"/>
    <property type="status" value="ALT_INIT"/>
    <property type="molecule type" value="mRNA"/>
</dbReference>
<dbReference type="EMBL" id="AK131367">
    <property type="protein sequence ID" value="BAD18518.1"/>
    <property type="molecule type" value="mRNA"/>
</dbReference>
<dbReference type="EMBL" id="BC132779">
    <property type="protein sequence ID" value="AAI32780.1"/>
    <property type="molecule type" value="mRNA"/>
</dbReference>
<dbReference type="EMBL" id="BC132781">
    <property type="protein sequence ID" value="AAI32782.1"/>
    <property type="molecule type" value="mRNA"/>
</dbReference>
<dbReference type="EMBL" id="BC142989">
    <property type="protein sequence ID" value="AAI42990.1"/>
    <property type="molecule type" value="mRNA"/>
</dbReference>
<dbReference type="EMBL" id="BC144216">
    <property type="protein sequence ID" value="AAI44217.1"/>
    <property type="molecule type" value="mRNA"/>
</dbReference>
<dbReference type="CCDS" id="CCDS4440.1"/>
<dbReference type="RefSeq" id="NP_085116.2">
    <property type="nucleotide sequence ID" value="NM_030613.3"/>
</dbReference>
<dbReference type="SMR" id="Q6ZN57"/>
<dbReference type="BioGRID" id="123115">
    <property type="interactions" value="15"/>
</dbReference>
<dbReference type="FunCoup" id="Q6ZN57">
    <property type="interactions" value="40"/>
</dbReference>
<dbReference type="IntAct" id="Q6ZN57">
    <property type="interactions" value="17"/>
</dbReference>
<dbReference type="MINT" id="Q6ZN57"/>
<dbReference type="STRING" id="9606.ENSP00000354453"/>
<dbReference type="iPTMnet" id="Q6ZN57"/>
<dbReference type="PhosphoSitePlus" id="Q6ZN57"/>
<dbReference type="BioMuta" id="ZFP2"/>
<dbReference type="DMDM" id="74758715"/>
<dbReference type="jPOST" id="Q6ZN57"/>
<dbReference type="MassIVE" id="Q6ZN57"/>
<dbReference type="PaxDb" id="9606-ENSP00000354453"/>
<dbReference type="PeptideAtlas" id="Q6ZN57"/>
<dbReference type="ProteomicsDB" id="67984"/>
<dbReference type="Pumba" id="Q6ZN57"/>
<dbReference type="Antibodypedia" id="29457">
    <property type="antibodies" value="43 antibodies from 17 providers"/>
</dbReference>
<dbReference type="DNASU" id="80108"/>
<dbReference type="Ensembl" id="ENST00000361362.7">
    <property type="protein sequence ID" value="ENSP00000354453.2"/>
    <property type="gene ID" value="ENSG00000198939.8"/>
</dbReference>
<dbReference type="Ensembl" id="ENST00000520301.5">
    <property type="protein sequence ID" value="ENSP00000430980.1"/>
    <property type="gene ID" value="ENSG00000198939.8"/>
</dbReference>
<dbReference type="Ensembl" id="ENST00000523286.1">
    <property type="protein sequence ID" value="ENSP00000430531.1"/>
    <property type="gene ID" value="ENSG00000198939.8"/>
</dbReference>
<dbReference type="GeneID" id="80108"/>
<dbReference type="KEGG" id="hsa:80108"/>
<dbReference type="MANE-Select" id="ENST00000361362.7">
    <property type="protein sequence ID" value="ENSP00000354453.2"/>
    <property type="RefSeq nucleotide sequence ID" value="NM_030613.4"/>
    <property type="RefSeq protein sequence ID" value="NP_085116.2"/>
</dbReference>
<dbReference type="UCSC" id="uc003mjn.2">
    <property type="organism name" value="human"/>
</dbReference>
<dbReference type="AGR" id="HGNC:26138"/>
<dbReference type="CTD" id="80108"/>
<dbReference type="DisGeNET" id="80108"/>
<dbReference type="GeneCards" id="ZFP2"/>
<dbReference type="HGNC" id="HGNC:26138">
    <property type="gene designation" value="ZFP2"/>
</dbReference>
<dbReference type="HPA" id="ENSG00000198939">
    <property type="expression patterns" value="Low tissue specificity"/>
</dbReference>
<dbReference type="neXtProt" id="NX_Q6ZN57"/>
<dbReference type="OpenTargets" id="ENSG00000198939"/>
<dbReference type="PharmGKB" id="PA142670528"/>
<dbReference type="VEuPathDB" id="HostDB:ENSG00000198939"/>
<dbReference type="eggNOG" id="KOG1721">
    <property type="taxonomic scope" value="Eukaryota"/>
</dbReference>
<dbReference type="GeneTree" id="ENSGT00940000162743"/>
<dbReference type="HOGENOM" id="CLU_002678_44_0_1"/>
<dbReference type="InParanoid" id="Q6ZN57"/>
<dbReference type="OMA" id="HNWNSHG"/>
<dbReference type="OrthoDB" id="9411774at2759"/>
<dbReference type="PAN-GO" id="Q6ZN57">
    <property type="GO annotations" value="3 GO annotations based on evolutionary models"/>
</dbReference>
<dbReference type="PhylomeDB" id="Q6ZN57"/>
<dbReference type="TreeFam" id="TF350858"/>
<dbReference type="PathwayCommons" id="Q6ZN57"/>
<dbReference type="Reactome" id="R-HSA-212436">
    <property type="pathway name" value="Generic Transcription Pathway"/>
</dbReference>
<dbReference type="SignaLink" id="Q6ZN57"/>
<dbReference type="BioGRID-ORCS" id="80108">
    <property type="hits" value="14 hits in 1138 CRISPR screens"/>
</dbReference>
<dbReference type="ChiTaRS" id="ZFP2">
    <property type="organism name" value="human"/>
</dbReference>
<dbReference type="GenomeRNAi" id="80108"/>
<dbReference type="Pharos" id="Q6ZN57">
    <property type="development level" value="Tdark"/>
</dbReference>
<dbReference type="PRO" id="PR:Q6ZN57"/>
<dbReference type="Proteomes" id="UP000005640">
    <property type="component" value="Chromosome 5"/>
</dbReference>
<dbReference type="RNAct" id="Q6ZN57">
    <property type="molecule type" value="protein"/>
</dbReference>
<dbReference type="Bgee" id="ENSG00000198939">
    <property type="expression patterns" value="Expressed in primordial germ cell in gonad and 105 other cell types or tissues"/>
</dbReference>
<dbReference type="ExpressionAtlas" id="Q6ZN57">
    <property type="expression patterns" value="baseline and differential"/>
</dbReference>
<dbReference type="GO" id="GO:0005634">
    <property type="term" value="C:nucleus"/>
    <property type="evidence" value="ECO:0007669"/>
    <property type="project" value="UniProtKB-SubCell"/>
</dbReference>
<dbReference type="GO" id="GO:0000981">
    <property type="term" value="F:DNA-binding transcription factor activity, RNA polymerase II-specific"/>
    <property type="evidence" value="ECO:0000318"/>
    <property type="project" value="GO_Central"/>
</dbReference>
<dbReference type="GO" id="GO:0000978">
    <property type="term" value="F:RNA polymerase II cis-regulatory region sequence-specific DNA binding"/>
    <property type="evidence" value="ECO:0000318"/>
    <property type="project" value="GO_Central"/>
</dbReference>
<dbReference type="GO" id="GO:0008270">
    <property type="term" value="F:zinc ion binding"/>
    <property type="evidence" value="ECO:0007669"/>
    <property type="project" value="UniProtKB-KW"/>
</dbReference>
<dbReference type="GO" id="GO:0006357">
    <property type="term" value="P:regulation of transcription by RNA polymerase II"/>
    <property type="evidence" value="ECO:0000318"/>
    <property type="project" value="GO_Central"/>
</dbReference>
<dbReference type="FunFam" id="3.30.160.60:FF:004137">
    <property type="match status" value="3"/>
</dbReference>
<dbReference type="FunFam" id="3.30.160.60:FF:000040">
    <property type="entry name" value="RB associated KRAB zinc finger"/>
    <property type="match status" value="1"/>
</dbReference>
<dbReference type="FunFam" id="3.30.160.60:FF:000705">
    <property type="entry name" value="zinc finger protein 2 homolog"/>
    <property type="match status" value="2"/>
</dbReference>
<dbReference type="FunFam" id="3.30.160.60:FF:000999">
    <property type="entry name" value="zinc finger protein 2 homolog"/>
    <property type="match status" value="1"/>
</dbReference>
<dbReference type="FunFam" id="3.30.160.60:FF:000224">
    <property type="entry name" value="Zinc finger protein 329"/>
    <property type="match status" value="1"/>
</dbReference>
<dbReference type="FunFam" id="3.30.160.60:FF:002343">
    <property type="entry name" value="Zinc finger protein 33A"/>
    <property type="match status" value="1"/>
</dbReference>
<dbReference type="FunFam" id="3.30.160.60:FF:002402">
    <property type="entry name" value="Zinc finger protein 347"/>
    <property type="match status" value="3"/>
</dbReference>
<dbReference type="FunFam" id="3.30.160.60:FF:000016">
    <property type="entry name" value="zinc finger protein 37 homolog"/>
    <property type="match status" value="1"/>
</dbReference>
<dbReference type="FunFam" id="3.30.160.60:FF:001498">
    <property type="entry name" value="Zinc finger protein 404"/>
    <property type="match status" value="1"/>
</dbReference>
<dbReference type="FunFam" id="3.30.160.60:FF:002254">
    <property type="entry name" value="Zinc finger protein 540"/>
    <property type="match status" value="2"/>
</dbReference>
<dbReference type="Gene3D" id="3.30.160.60">
    <property type="entry name" value="Classic Zinc Finger"/>
    <property type="match status" value="13"/>
</dbReference>
<dbReference type="InterPro" id="IPR036236">
    <property type="entry name" value="Znf_C2H2_sf"/>
</dbReference>
<dbReference type="InterPro" id="IPR013087">
    <property type="entry name" value="Znf_C2H2_type"/>
</dbReference>
<dbReference type="PANTHER" id="PTHR24394">
    <property type="entry name" value="ZINC FINGER PROTEIN"/>
    <property type="match status" value="1"/>
</dbReference>
<dbReference type="PANTHER" id="PTHR24394:SF48">
    <property type="entry name" value="ZINC FINGER PROTEIN 771"/>
    <property type="match status" value="1"/>
</dbReference>
<dbReference type="Pfam" id="PF00096">
    <property type="entry name" value="zf-C2H2"/>
    <property type="match status" value="13"/>
</dbReference>
<dbReference type="SMART" id="SM00355">
    <property type="entry name" value="ZnF_C2H2"/>
    <property type="match status" value="13"/>
</dbReference>
<dbReference type="SUPFAM" id="SSF57667">
    <property type="entry name" value="beta-beta-alpha zinc fingers"/>
    <property type="match status" value="7"/>
</dbReference>
<dbReference type="PROSITE" id="PS00028">
    <property type="entry name" value="ZINC_FINGER_C2H2_1"/>
    <property type="match status" value="13"/>
</dbReference>
<dbReference type="PROSITE" id="PS50157">
    <property type="entry name" value="ZINC_FINGER_C2H2_2"/>
    <property type="match status" value="13"/>
</dbReference>
<keyword id="KW-0238">DNA-binding</keyword>
<keyword id="KW-0479">Metal-binding</keyword>
<keyword id="KW-0539">Nucleus</keyword>
<keyword id="KW-1185">Reference proteome</keyword>
<keyword id="KW-0677">Repeat</keyword>
<keyword id="KW-0804">Transcription</keyword>
<keyword id="KW-0805">Transcription regulation</keyword>
<keyword id="KW-0862">Zinc</keyword>
<keyword id="KW-0863">Zinc-finger</keyword>
<evidence type="ECO:0000250" key="1"/>
<evidence type="ECO:0000255" key="2">
    <source>
        <dbReference type="PROSITE-ProRule" id="PRU00042"/>
    </source>
</evidence>
<evidence type="ECO:0000305" key="3"/>
<organism>
    <name type="scientific">Homo sapiens</name>
    <name type="common">Human</name>
    <dbReference type="NCBI Taxonomy" id="9606"/>
    <lineage>
        <taxon>Eukaryota</taxon>
        <taxon>Metazoa</taxon>
        <taxon>Chordata</taxon>
        <taxon>Craniata</taxon>
        <taxon>Vertebrata</taxon>
        <taxon>Euteleostomi</taxon>
        <taxon>Mammalia</taxon>
        <taxon>Eutheria</taxon>
        <taxon>Euarchontoglires</taxon>
        <taxon>Primates</taxon>
        <taxon>Haplorrhini</taxon>
        <taxon>Catarrhini</taxon>
        <taxon>Hominidae</taxon>
        <taxon>Homo</taxon>
    </lineage>
</organism>
<reference key="1">
    <citation type="journal article" date="2004" name="Nat. Genet.">
        <title>Complete sequencing and characterization of 21,243 full-length human cDNAs.</title>
        <authorList>
            <person name="Ota T."/>
            <person name="Suzuki Y."/>
            <person name="Nishikawa T."/>
            <person name="Otsuki T."/>
            <person name="Sugiyama T."/>
            <person name="Irie R."/>
            <person name="Wakamatsu A."/>
            <person name="Hayashi K."/>
            <person name="Sato H."/>
            <person name="Nagai K."/>
            <person name="Kimura K."/>
            <person name="Makita H."/>
            <person name="Sekine M."/>
            <person name="Obayashi M."/>
            <person name="Nishi T."/>
            <person name="Shibahara T."/>
            <person name="Tanaka T."/>
            <person name="Ishii S."/>
            <person name="Yamamoto J."/>
            <person name="Saito K."/>
            <person name="Kawai Y."/>
            <person name="Isono Y."/>
            <person name="Nakamura Y."/>
            <person name="Nagahari K."/>
            <person name="Murakami K."/>
            <person name="Yasuda T."/>
            <person name="Iwayanagi T."/>
            <person name="Wagatsuma M."/>
            <person name="Shiratori A."/>
            <person name="Sudo H."/>
            <person name="Hosoiri T."/>
            <person name="Kaku Y."/>
            <person name="Kodaira H."/>
            <person name="Kondo H."/>
            <person name="Sugawara M."/>
            <person name="Takahashi M."/>
            <person name="Kanda K."/>
            <person name="Yokoi T."/>
            <person name="Furuya T."/>
            <person name="Kikkawa E."/>
            <person name="Omura Y."/>
            <person name="Abe K."/>
            <person name="Kamihara K."/>
            <person name="Katsuta N."/>
            <person name="Sato K."/>
            <person name="Tanikawa M."/>
            <person name="Yamazaki M."/>
            <person name="Ninomiya K."/>
            <person name="Ishibashi T."/>
            <person name="Yamashita H."/>
            <person name="Murakawa K."/>
            <person name="Fujimori K."/>
            <person name="Tanai H."/>
            <person name="Kimata M."/>
            <person name="Watanabe M."/>
            <person name="Hiraoka S."/>
            <person name="Chiba Y."/>
            <person name="Ishida S."/>
            <person name="Ono Y."/>
            <person name="Takiguchi S."/>
            <person name="Watanabe S."/>
            <person name="Yosida M."/>
            <person name="Hotuta T."/>
            <person name="Kusano J."/>
            <person name="Kanehori K."/>
            <person name="Takahashi-Fujii A."/>
            <person name="Hara H."/>
            <person name="Tanase T.-O."/>
            <person name="Nomura Y."/>
            <person name="Togiya S."/>
            <person name="Komai F."/>
            <person name="Hara R."/>
            <person name="Takeuchi K."/>
            <person name="Arita M."/>
            <person name="Imose N."/>
            <person name="Musashino K."/>
            <person name="Yuuki H."/>
            <person name="Oshima A."/>
            <person name="Sasaki N."/>
            <person name="Aotsuka S."/>
            <person name="Yoshikawa Y."/>
            <person name="Matsunawa H."/>
            <person name="Ichihara T."/>
            <person name="Shiohata N."/>
            <person name="Sano S."/>
            <person name="Moriya S."/>
            <person name="Momiyama H."/>
            <person name="Satoh N."/>
            <person name="Takami S."/>
            <person name="Terashima Y."/>
            <person name="Suzuki O."/>
            <person name="Nakagawa S."/>
            <person name="Senoh A."/>
            <person name="Mizoguchi H."/>
            <person name="Goto Y."/>
            <person name="Shimizu F."/>
            <person name="Wakebe H."/>
            <person name="Hishigaki H."/>
            <person name="Watanabe T."/>
            <person name="Sugiyama A."/>
            <person name="Takemoto M."/>
            <person name="Kawakami B."/>
            <person name="Yamazaki M."/>
            <person name="Watanabe K."/>
            <person name="Kumagai A."/>
            <person name="Itakura S."/>
            <person name="Fukuzumi Y."/>
            <person name="Fujimori Y."/>
            <person name="Komiyama M."/>
            <person name="Tashiro H."/>
            <person name="Tanigami A."/>
            <person name="Fujiwara T."/>
            <person name="Ono T."/>
            <person name="Yamada K."/>
            <person name="Fujii Y."/>
            <person name="Ozaki K."/>
            <person name="Hirao M."/>
            <person name="Ohmori Y."/>
            <person name="Kawabata A."/>
            <person name="Hikiji T."/>
            <person name="Kobatake N."/>
            <person name="Inagaki H."/>
            <person name="Ikema Y."/>
            <person name="Okamoto S."/>
            <person name="Okitani R."/>
            <person name="Kawakami T."/>
            <person name="Noguchi S."/>
            <person name="Itoh T."/>
            <person name="Shigeta K."/>
            <person name="Senba T."/>
            <person name="Matsumura K."/>
            <person name="Nakajima Y."/>
            <person name="Mizuno T."/>
            <person name="Morinaga M."/>
            <person name="Sasaki M."/>
            <person name="Togashi T."/>
            <person name="Oyama M."/>
            <person name="Hata H."/>
            <person name="Watanabe M."/>
            <person name="Komatsu T."/>
            <person name="Mizushima-Sugano J."/>
            <person name="Satoh T."/>
            <person name="Shirai Y."/>
            <person name="Takahashi Y."/>
            <person name="Nakagawa K."/>
            <person name="Okumura K."/>
            <person name="Nagase T."/>
            <person name="Nomura N."/>
            <person name="Kikuchi H."/>
            <person name="Masuho Y."/>
            <person name="Yamashita R."/>
            <person name="Nakai K."/>
            <person name="Yada T."/>
            <person name="Nakamura Y."/>
            <person name="Ohara O."/>
            <person name="Isogai T."/>
            <person name="Sugano S."/>
        </authorList>
    </citation>
    <scope>NUCLEOTIDE SEQUENCE [LARGE SCALE MRNA]</scope>
    <source>
        <tissue>Cerebellum</tissue>
        <tissue>Colon</tissue>
    </source>
</reference>
<reference key="2">
    <citation type="journal article" date="2004" name="Genome Res.">
        <title>The status, quality, and expansion of the NIH full-length cDNA project: the Mammalian Gene Collection (MGC).</title>
        <authorList>
            <consortium name="The MGC Project Team"/>
        </authorList>
    </citation>
    <scope>NUCLEOTIDE SEQUENCE [LARGE SCALE MRNA]</scope>
    <source>
        <tissue>Brain</tissue>
    </source>
</reference>
<feature type="chain" id="PRO_0000291967" description="Zinc finger protein ZFP2">
    <location>
        <begin position="1"/>
        <end position="461"/>
    </location>
</feature>
<feature type="zinc finger region" description="C2H2-type 1" evidence="2">
    <location>
        <begin position="102"/>
        <end position="124"/>
    </location>
</feature>
<feature type="zinc finger region" description="C2H2-type 2" evidence="2">
    <location>
        <begin position="130"/>
        <end position="152"/>
    </location>
</feature>
<feature type="zinc finger region" description="C2H2-type 3" evidence="2">
    <location>
        <begin position="158"/>
        <end position="180"/>
    </location>
</feature>
<feature type="zinc finger region" description="C2H2-type 4" evidence="2">
    <location>
        <begin position="186"/>
        <end position="208"/>
    </location>
</feature>
<feature type="zinc finger region" description="C2H2-type 5" evidence="2">
    <location>
        <begin position="214"/>
        <end position="236"/>
    </location>
</feature>
<feature type="zinc finger region" description="C2H2-type 6" evidence="2">
    <location>
        <begin position="242"/>
        <end position="264"/>
    </location>
</feature>
<feature type="zinc finger region" description="C2H2-type 7" evidence="2">
    <location>
        <begin position="270"/>
        <end position="292"/>
    </location>
</feature>
<feature type="zinc finger region" description="C2H2-type 8" evidence="2">
    <location>
        <begin position="298"/>
        <end position="320"/>
    </location>
</feature>
<feature type="zinc finger region" description="C2H2-type 9" evidence="2">
    <location>
        <begin position="326"/>
        <end position="348"/>
    </location>
</feature>
<feature type="zinc finger region" description="C2H2-type 10" evidence="2">
    <location>
        <begin position="354"/>
        <end position="376"/>
    </location>
</feature>
<feature type="zinc finger region" description="C2H2-type 11" evidence="2">
    <location>
        <begin position="382"/>
        <end position="404"/>
    </location>
</feature>
<feature type="zinc finger region" description="C2H2-type 12" evidence="2">
    <location>
        <begin position="410"/>
        <end position="432"/>
    </location>
</feature>
<feature type="zinc finger region" description="C2H2-type 13" evidence="2">
    <location>
        <begin position="438"/>
        <end position="460"/>
    </location>
</feature>
<feature type="sequence variant" id="VAR_032904" description="In dbSNP:rs28678700.">
    <original>Q</original>
    <variation>H</variation>
    <location>
        <position position="113"/>
    </location>
</feature>
<feature type="sequence variant" id="VAR_032905" description="In dbSNP:rs11956147.">
    <original>R</original>
    <variation>G</variation>
    <location>
        <position position="142"/>
    </location>
</feature>
<accession>Q6ZN57</accession>
<accession>A5PLN5</accession>
<accession>B7ZM23</accession>
<accession>Q9H6Z6</accession>
<name>ZFP2_HUMAN</name>
<sequence length="461" mass="52740">MEREGIWHSTLGETWEPNNWLEGQQDSHLSQVGVTHKETFTEMRVCGGNEFERCSSQDSILDTQQSIPMVKRPHNCNSHGEDATQNSELIKTQRMFVGKKIYECNQCSKTFSQSSSLLKHQRIHTGEKPYKCNVCGKHFIERSSLTVHQRIHTGEKPYKCNECGKAFSQSMNLTVHQRTHTGEKPYQCKECGKAFHKNSSLIQHERIHTGEKPYKCNECGKAFTQSMNLTVHQRTHTGEKPYECNECGKAFSQSMHLIVHQRSHTGEKPYECSQCGKAFSKSSTLTLHQRNHTGEKPYKCNKCGKSFSQSTYLIEHQRLHSGVKPFECNECGKAFSKNSSLTQHRRIHTGEKPYECMVCGKHFTGRSSLTVHQVIHTGEKPYECNECGKAFSQSAYLIEHQRIHTGEKPYECDQCGKAFIKNSSLTVHQRTHTGEKPYQCNECGKAFSRSTNLTRHQRTHT</sequence>
<comment type="function">
    <text evidence="1">Probable transcription factor involved in neuronal differentiation and/or phenotypic maintenance.</text>
</comment>
<comment type="interaction">
    <interactant intactId="EBI-7236323">
        <id>Q6ZN57</id>
    </interactant>
    <interactant intactId="EBI-10257921">
        <id>Q7Z5W3</id>
        <label>BCDIN3D</label>
    </interactant>
    <organismsDiffer>false</organismsDiffer>
    <experiments>3</experiments>
</comment>
<comment type="interaction">
    <interactant intactId="EBI-7236323">
        <id>Q6ZN57</id>
    </interactant>
    <interactant intactId="EBI-10976677">
        <id>G5E9A7</id>
        <label>DMWD</label>
    </interactant>
    <organismsDiffer>false</organismsDiffer>
    <experiments>3</experiments>
</comment>
<comment type="interaction">
    <interactant intactId="EBI-7236323">
        <id>Q6ZN57</id>
    </interactant>
    <interactant intactId="EBI-618309">
        <id>Q08379</id>
        <label>GOLGA2</label>
    </interactant>
    <organismsDiffer>false</organismsDiffer>
    <experiments>3</experiments>
</comment>
<comment type="interaction">
    <interactant intactId="EBI-7236323">
        <id>Q6ZN57</id>
    </interactant>
    <interactant intactId="EBI-466029">
        <id>P42858</id>
        <label>HTT</label>
    </interactant>
    <organismsDiffer>false</organismsDiffer>
    <experiments>12</experiments>
</comment>
<comment type="interaction">
    <interactant intactId="EBI-7236323">
        <id>Q6ZN57</id>
    </interactant>
    <interactant intactId="EBI-358808">
        <id>O15397</id>
        <label>IPO8</label>
    </interactant>
    <organismsDiffer>false</organismsDiffer>
    <experiments>3</experiments>
</comment>
<comment type="interaction">
    <interactant intactId="EBI-7236323">
        <id>Q6ZN57</id>
    </interactant>
    <interactant intactId="EBI-10171697">
        <id>Q6A162</id>
        <label>KRT40</label>
    </interactant>
    <organismsDiffer>false</organismsDiffer>
    <experiments>6</experiments>
</comment>
<comment type="interaction">
    <interactant intactId="EBI-7236323">
        <id>Q6ZN57</id>
    </interactant>
    <interactant intactId="EBI-351935">
        <id>P02545</id>
        <label>LMNA</label>
    </interactant>
    <organismsDiffer>false</organismsDiffer>
    <experiments>3</experiments>
</comment>
<comment type="interaction">
    <interactant intactId="EBI-7236323">
        <id>Q6ZN57</id>
    </interactant>
    <interactant intactId="EBI-10255081">
        <id>Q9NYL2-2</id>
        <label>MAP3K20</label>
    </interactant>
    <organismsDiffer>false</organismsDiffer>
    <experiments>7</experiments>
</comment>
<comment type="interaction">
    <interactant intactId="EBI-7236323">
        <id>Q6ZN57</id>
    </interactant>
    <interactant intactId="EBI-742948">
        <id>Q5JR59</id>
        <label>MTUS2</label>
    </interactant>
    <organismsDiffer>false</organismsDiffer>
    <experiments>3</experiments>
</comment>
<comment type="interaction">
    <interactant intactId="EBI-7236323">
        <id>Q6ZN57</id>
    </interactant>
    <interactant intactId="EBI-79165">
        <id>Q9NRD5</id>
        <label>PICK1</label>
    </interactant>
    <organismsDiffer>false</organismsDiffer>
    <experiments>3</experiments>
</comment>
<comment type="interaction">
    <interactant intactId="EBI-7236323">
        <id>Q6ZN57</id>
    </interactant>
    <interactant intactId="EBI-5235340">
        <id>Q7Z699</id>
        <label>SPRED1</label>
    </interactant>
    <organismsDiffer>false</organismsDiffer>
    <experiments>3</experiments>
</comment>
<comment type="interaction">
    <interactant intactId="EBI-7236323">
        <id>Q6ZN57</id>
    </interactant>
    <interactant intactId="EBI-725997">
        <id>Q8WV44</id>
        <label>TRIM41</label>
    </interactant>
    <organismsDiffer>false</organismsDiffer>
    <experiments>6</experiments>
</comment>
<comment type="interaction">
    <interactant intactId="EBI-7236323">
        <id>Q6ZN57</id>
    </interactant>
    <interactant intactId="EBI-12806590">
        <id>Q86WV8</id>
        <label>TSC1</label>
    </interactant>
    <organismsDiffer>false</organismsDiffer>
    <experiments>3</experiments>
</comment>
<comment type="subcellular location">
    <subcellularLocation>
        <location evidence="3">Nucleus</location>
    </subcellularLocation>
</comment>
<comment type="similarity">
    <text evidence="3">Belongs to the krueppel C2H2-type zinc-finger protein family.</text>
</comment>
<comment type="sequence caution" evidence="3">
    <conflict type="erroneous initiation">
        <sequence resource="EMBL-CDS" id="BAB15104"/>
    </conflict>
</comment>